<evidence type="ECO:0000255" key="1">
    <source>
        <dbReference type="HAMAP-Rule" id="MF_01584"/>
    </source>
</evidence>
<protein>
    <recommendedName>
        <fullName evidence="1">UPF0502 protein VV2_0756</fullName>
    </recommendedName>
</protein>
<reference key="1">
    <citation type="submission" date="2002-12" db="EMBL/GenBank/DDBJ databases">
        <title>Complete genome sequence of Vibrio vulnificus CMCP6.</title>
        <authorList>
            <person name="Rhee J.H."/>
            <person name="Kim S.Y."/>
            <person name="Chung S.S."/>
            <person name="Kim J.J."/>
            <person name="Moon Y.H."/>
            <person name="Jeong H."/>
            <person name="Choy H.E."/>
        </authorList>
    </citation>
    <scope>NUCLEOTIDE SEQUENCE [LARGE SCALE GENOMIC DNA]</scope>
    <source>
        <strain>CMCP6</strain>
    </source>
</reference>
<accession>Q8D5Z2</accession>
<name>Y4756_VIBVU</name>
<gene>
    <name type="ordered locus">VV2_0756</name>
</gene>
<sequence length="220" mass="24589">MRTELTPIEARVIGCLIEKEVTTPDQYPLSLNALTNACNQKSNREPVMSLSESEVLDAVDQLISRRLVSDESGFNSRVSKYQHRFCNTEFGDLKLSAQEKGIVCCMLLRGPQTPGELRTRTNRLATFADVKEVETVLDKLASEERGQLVVKLPIEPGKRESRYMHQFCGEVDLDAFQGSALMTASSTPQFDDERVAHLEAEVEALKQELAELKSLVNSLL</sequence>
<proteinExistence type="inferred from homology"/>
<comment type="similarity">
    <text evidence="1">Belongs to the UPF0502 family.</text>
</comment>
<organism>
    <name type="scientific">Vibrio vulnificus (strain CMCP6)</name>
    <dbReference type="NCBI Taxonomy" id="216895"/>
    <lineage>
        <taxon>Bacteria</taxon>
        <taxon>Pseudomonadati</taxon>
        <taxon>Pseudomonadota</taxon>
        <taxon>Gammaproteobacteria</taxon>
        <taxon>Vibrionales</taxon>
        <taxon>Vibrionaceae</taxon>
        <taxon>Vibrio</taxon>
    </lineage>
</organism>
<feature type="chain" id="PRO_0000309442" description="UPF0502 protein VV2_0756">
    <location>
        <begin position="1"/>
        <end position="220"/>
    </location>
</feature>
<dbReference type="EMBL" id="AE016796">
    <property type="protein sequence ID" value="AAO07687.1"/>
    <property type="molecule type" value="Genomic_DNA"/>
</dbReference>
<dbReference type="RefSeq" id="WP_011081683.1">
    <property type="nucleotide sequence ID" value="NC_004460.2"/>
</dbReference>
<dbReference type="SMR" id="Q8D5Z2"/>
<dbReference type="KEGG" id="vvu:VV2_0756"/>
<dbReference type="HOGENOM" id="CLU_057831_2_0_6"/>
<dbReference type="Proteomes" id="UP000002275">
    <property type="component" value="Chromosome 2"/>
</dbReference>
<dbReference type="Gene3D" id="1.10.10.10">
    <property type="entry name" value="Winged helix-like DNA-binding domain superfamily/Winged helix DNA-binding domain"/>
    <property type="match status" value="2"/>
</dbReference>
<dbReference type="HAMAP" id="MF_01584">
    <property type="entry name" value="UPF0502"/>
    <property type="match status" value="1"/>
</dbReference>
<dbReference type="InterPro" id="IPR007432">
    <property type="entry name" value="DUF480"/>
</dbReference>
<dbReference type="InterPro" id="IPR036388">
    <property type="entry name" value="WH-like_DNA-bd_sf"/>
</dbReference>
<dbReference type="InterPro" id="IPR036390">
    <property type="entry name" value="WH_DNA-bd_sf"/>
</dbReference>
<dbReference type="PANTHER" id="PTHR38768">
    <property type="entry name" value="UPF0502 PROTEIN YCEH"/>
    <property type="match status" value="1"/>
</dbReference>
<dbReference type="PANTHER" id="PTHR38768:SF1">
    <property type="entry name" value="UPF0502 PROTEIN YCEH"/>
    <property type="match status" value="1"/>
</dbReference>
<dbReference type="Pfam" id="PF04337">
    <property type="entry name" value="DUF480"/>
    <property type="match status" value="1"/>
</dbReference>
<dbReference type="SUPFAM" id="SSF46785">
    <property type="entry name" value="Winged helix' DNA-binding domain"/>
    <property type="match status" value="2"/>
</dbReference>